<organism>
    <name type="scientific">Chloroflexus aurantiacus (strain ATCC 29364 / DSM 637 / Y-400-fl)</name>
    <dbReference type="NCBI Taxonomy" id="480224"/>
    <lineage>
        <taxon>Bacteria</taxon>
        <taxon>Bacillati</taxon>
        <taxon>Chloroflexota</taxon>
        <taxon>Chloroflexia</taxon>
        <taxon>Chloroflexales</taxon>
        <taxon>Chloroflexineae</taxon>
        <taxon>Chloroflexaceae</taxon>
        <taxon>Chloroflexus</taxon>
    </lineage>
</organism>
<name>KITH_CHLSY</name>
<gene>
    <name evidence="1" type="primary">tdk</name>
    <name type="ordered locus">Chy400_2487</name>
</gene>
<comment type="catalytic activity">
    <reaction evidence="1">
        <text>thymidine + ATP = dTMP + ADP + H(+)</text>
        <dbReference type="Rhea" id="RHEA:19129"/>
        <dbReference type="ChEBI" id="CHEBI:15378"/>
        <dbReference type="ChEBI" id="CHEBI:17748"/>
        <dbReference type="ChEBI" id="CHEBI:30616"/>
        <dbReference type="ChEBI" id="CHEBI:63528"/>
        <dbReference type="ChEBI" id="CHEBI:456216"/>
        <dbReference type="EC" id="2.7.1.21"/>
    </reaction>
</comment>
<comment type="subunit">
    <text evidence="1">Homotetramer.</text>
</comment>
<comment type="subcellular location">
    <subcellularLocation>
        <location evidence="1">Cytoplasm</location>
    </subcellularLocation>
</comment>
<comment type="similarity">
    <text evidence="1">Belongs to the thymidine kinase family.</text>
</comment>
<reference key="1">
    <citation type="submission" date="2009-01" db="EMBL/GenBank/DDBJ databases">
        <title>Complete sequence of Chloroflexus sp. Y-400-fl.</title>
        <authorList>
            <consortium name="US DOE Joint Genome Institute"/>
            <person name="Lucas S."/>
            <person name="Copeland A."/>
            <person name="Lapidus A."/>
            <person name="Glavina del Rio T."/>
            <person name="Dalin E."/>
            <person name="Tice H."/>
            <person name="Bruce D."/>
            <person name="Goodwin L."/>
            <person name="Pitluck S."/>
            <person name="Sims D."/>
            <person name="Kiss H."/>
            <person name="Brettin T."/>
            <person name="Detter J.C."/>
            <person name="Han C."/>
            <person name="Larimer F."/>
            <person name="Land M."/>
            <person name="Hauser L."/>
            <person name="Kyrpides N."/>
            <person name="Ovchinnikova G."/>
            <person name="Bryant D.A."/>
            <person name="Richardson P."/>
        </authorList>
    </citation>
    <scope>NUCLEOTIDE SEQUENCE [LARGE SCALE GENOMIC DNA]</scope>
    <source>
        <strain>ATCC 29364 / DSM 637 / Y-400-fl</strain>
    </source>
</reference>
<sequence length="193" mass="21452">MTRPSDGGRIEVICGCMYSGKTEELIRRMRQVRIARQSYRIFTPRMDTRYAEGQVASHSGSRLEAITVATMKDILAHAEDAQVVAIDELHLFDDDPAEMVRGCQWLANRGVRVIVAGLDLNYRAEPFPAMMHLLALAEQVDKLYAICVKCGAYATRSQRLIDGKPAPADAPTIVVGGLDMYEARCRTCYEPAV</sequence>
<proteinExistence type="inferred from homology"/>
<protein>
    <recommendedName>
        <fullName evidence="1">Thymidine kinase</fullName>
        <ecNumber evidence="1">2.7.1.21</ecNumber>
    </recommendedName>
</protein>
<keyword id="KW-0067">ATP-binding</keyword>
<keyword id="KW-0963">Cytoplasm</keyword>
<keyword id="KW-0237">DNA synthesis</keyword>
<keyword id="KW-0418">Kinase</keyword>
<keyword id="KW-0479">Metal-binding</keyword>
<keyword id="KW-0547">Nucleotide-binding</keyword>
<keyword id="KW-0808">Transferase</keyword>
<keyword id="KW-0862">Zinc</keyword>
<dbReference type="EC" id="2.7.1.21" evidence="1"/>
<dbReference type="EMBL" id="CP001364">
    <property type="protein sequence ID" value="ACM53881.1"/>
    <property type="molecule type" value="Genomic_DNA"/>
</dbReference>
<dbReference type="SMR" id="B9LJ65"/>
<dbReference type="KEGG" id="chl:Chy400_2487"/>
<dbReference type="HOGENOM" id="CLU_064400_3_0_0"/>
<dbReference type="OrthoDB" id="9781579at2"/>
<dbReference type="GO" id="GO:0005829">
    <property type="term" value="C:cytosol"/>
    <property type="evidence" value="ECO:0007669"/>
    <property type="project" value="TreeGrafter"/>
</dbReference>
<dbReference type="GO" id="GO:0005524">
    <property type="term" value="F:ATP binding"/>
    <property type="evidence" value="ECO:0007669"/>
    <property type="project" value="UniProtKB-UniRule"/>
</dbReference>
<dbReference type="GO" id="GO:0004797">
    <property type="term" value="F:thymidine kinase activity"/>
    <property type="evidence" value="ECO:0007669"/>
    <property type="project" value="UniProtKB-UniRule"/>
</dbReference>
<dbReference type="GO" id="GO:0008270">
    <property type="term" value="F:zinc ion binding"/>
    <property type="evidence" value="ECO:0007669"/>
    <property type="project" value="UniProtKB-UniRule"/>
</dbReference>
<dbReference type="GO" id="GO:0071897">
    <property type="term" value="P:DNA biosynthetic process"/>
    <property type="evidence" value="ECO:0007669"/>
    <property type="project" value="UniProtKB-KW"/>
</dbReference>
<dbReference type="GO" id="GO:0046104">
    <property type="term" value="P:thymidine metabolic process"/>
    <property type="evidence" value="ECO:0007669"/>
    <property type="project" value="TreeGrafter"/>
</dbReference>
<dbReference type="FunFam" id="3.40.50.300:FF:004135">
    <property type="entry name" value="Thymidine kinase"/>
    <property type="match status" value="1"/>
</dbReference>
<dbReference type="Gene3D" id="3.30.60.20">
    <property type="match status" value="1"/>
</dbReference>
<dbReference type="Gene3D" id="3.40.50.300">
    <property type="entry name" value="P-loop containing nucleotide triphosphate hydrolases"/>
    <property type="match status" value="1"/>
</dbReference>
<dbReference type="HAMAP" id="MF_00124">
    <property type="entry name" value="Thymidine_kinase"/>
    <property type="match status" value="1"/>
</dbReference>
<dbReference type="InterPro" id="IPR027417">
    <property type="entry name" value="P-loop_NTPase"/>
</dbReference>
<dbReference type="InterPro" id="IPR001267">
    <property type="entry name" value="Thymidine_kinase"/>
</dbReference>
<dbReference type="InterPro" id="IPR020633">
    <property type="entry name" value="Thymidine_kinase_CS"/>
</dbReference>
<dbReference type="NCBIfam" id="NF003296">
    <property type="entry name" value="PRK04296.1-1"/>
    <property type="match status" value="1"/>
</dbReference>
<dbReference type="PANTHER" id="PTHR11441">
    <property type="entry name" value="THYMIDINE KINASE"/>
    <property type="match status" value="1"/>
</dbReference>
<dbReference type="PANTHER" id="PTHR11441:SF0">
    <property type="entry name" value="THYMIDINE KINASE, CYTOSOLIC"/>
    <property type="match status" value="1"/>
</dbReference>
<dbReference type="Pfam" id="PF00265">
    <property type="entry name" value="TK"/>
    <property type="match status" value="1"/>
</dbReference>
<dbReference type="PIRSF" id="PIRSF035805">
    <property type="entry name" value="TK_cell"/>
    <property type="match status" value="1"/>
</dbReference>
<dbReference type="SUPFAM" id="SSF57716">
    <property type="entry name" value="Glucocorticoid receptor-like (DNA-binding domain)"/>
    <property type="match status" value="1"/>
</dbReference>
<dbReference type="SUPFAM" id="SSF52540">
    <property type="entry name" value="P-loop containing nucleoside triphosphate hydrolases"/>
    <property type="match status" value="1"/>
</dbReference>
<dbReference type="PROSITE" id="PS00603">
    <property type="entry name" value="TK_CELLULAR_TYPE"/>
    <property type="match status" value="1"/>
</dbReference>
<evidence type="ECO:0000255" key="1">
    <source>
        <dbReference type="HAMAP-Rule" id="MF_00124"/>
    </source>
</evidence>
<accession>B9LJ65</accession>
<feature type="chain" id="PRO_1000122654" description="Thymidine kinase">
    <location>
        <begin position="1"/>
        <end position="193"/>
    </location>
</feature>
<feature type="active site" description="Proton acceptor" evidence="1">
    <location>
        <position position="88"/>
    </location>
</feature>
<feature type="binding site" evidence="1">
    <location>
        <begin position="15"/>
        <end position="22"/>
    </location>
    <ligand>
        <name>ATP</name>
        <dbReference type="ChEBI" id="CHEBI:30616"/>
    </ligand>
</feature>
<feature type="binding site" evidence="1">
    <location>
        <begin position="87"/>
        <end position="90"/>
    </location>
    <ligand>
        <name>ATP</name>
        <dbReference type="ChEBI" id="CHEBI:30616"/>
    </ligand>
</feature>
<feature type="binding site" evidence="1">
    <location>
        <position position="147"/>
    </location>
    <ligand>
        <name>Zn(2+)</name>
        <dbReference type="ChEBI" id="CHEBI:29105"/>
    </ligand>
</feature>
<feature type="binding site" evidence="1">
    <location>
        <position position="150"/>
    </location>
    <ligand>
        <name>Zn(2+)</name>
        <dbReference type="ChEBI" id="CHEBI:29105"/>
    </ligand>
</feature>
<feature type="binding site" evidence="1">
    <location>
        <position position="185"/>
    </location>
    <ligand>
        <name>Zn(2+)</name>
        <dbReference type="ChEBI" id="CHEBI:29105"/>
    </ligand>
</feature>
<feature type="binding site" evidence="1">
    <location>
        <position position="188"/>
    </location>
    <ligand>
        <name>Zn(2+)</name>
        <dbReference type="ChEBI" id="CHEBI:29105"/>
    </ligand>
</feature>